<keyword id="KW-0067">ATP-binding</keyword>
<keyword id="KW-0963">Cytoplasm</keyword>
<keyword id="KW-0324">Glycolysis</keyword>
<keyword id="KW-0418">Kinase</keyword>
<keyword id="KW-0547">Nucleotide-binding</keyword>
<keyword id="KW-0808">Transferase</keyword>
<comment type="catalytic activity">
    <reaction evidence="1">
        <text>(2R)-3-phosphoglycerate + ATP = (2R)-3-phospho-glyceroyl phosphate + ADP</text>
        <dbReference type="Rhea" id="RHEA:14801"/>
        <dbReference type="ChEBI" id="CHEBI:30616"/>
        <dbReference type="ChEBI" id="CHEBI:57604"/>
        <dbReference type="ChEBI" id="CHEBI:58272"/>
        <dbReference type="ChEBI" id="CHEBI:456216"/>
        <dbReference type="EC" id="2.7.2.3"/>
    </reaction>
</comment>
<comment type="pathway">
    <text evidence="1">Carbohydrate degradation; glycolysis; pyruvate from D-glyceraldehyde 3-phosphate: step 2/5.</text>
</comment>
<comment type="subunit">
    <text evidence="1">Monomer.</text>
</comment>
<comment type="subcellular location">
    <subcellularLocation>
        <location evidence="1">Cytoplasm</location>
    </subcellularLocation>
</comment>
<comment type="similarity">
    <text evidence="1">Belongs to the phosphoglycerate kinase family.</text>
</comment>
<name>PGK_STRTD</name>
<organism>
    <name type="scientific">Streptococcus thermophilus (strain ATCC BAA-491 / LMD-9)</name>
    <dbReference type="NCBI Taxonomy" id="322159"/>
    <lineage>
        <taxon>Bacteria</taxon>
        <taxon>Bacillati</taxon>
        <taxon>Bacillota</taxon>
        <taxon>Bacilli</taxon>
        <taxon>Lactobacillales</taxon>
        <taxon>Streptococcaceae</taxon>
        <taxon>Streptococcus</taxon>
    </lineage>
</organism>
<evidence type="ECO:0000255" key="1">
    <source>
        <dbReference type="HAMAP-Rule" id="MF_00145"/>
    </source>
</evidence>
<proteinExistence type="inferred from homology"/>
<dbReference type="EC" id="2.7.2.3" evidence="1"/>
<dbReference type="EMBL" id="CP000419">
    <property type="protein sequence ID" value="ABJ66894.1"/>
    <property type="molecule type" value="Genomic_DNA"/>
</dbReference>
<dbReference type="RefSeq" id="WP_011681644.1">
    <property type="nucleotide sequence ID" value="NC_008532.1"/>
</dbReference>
<dbReference type="SMR" id="Q03IS8"/>
<dbReference type="KEGG" id="ste:STER_1755"/>
<dbReference type="HOGENOM" id="CLU_025427_0_2_9"/>
<dbReference type="UniPathway" id="UPA00109">
    <property type="reaction ID" value="UER00185"/>
</dbReference>
<dbReference type="GO" id="GO:0005829">
    <property type="term" value="C:cytosol"/>
    <property type="evidence" value="ECO:0007669"/>
    <property type="project" value="TreeGrafter"/>
</dbReference>
<dbReference type="GO" id="GO:0043531">
    <property type="term" value="F:ADP binding"/>
    <property type="evidence" value="ECO:0007669"/>
    <property type="project" value="TreeGrafter"/>
</dbReference>
<dbReference type="GO" id="GO:0005524">
    <property type="term" value="F:ATP binding"/>
    <property type="evidence" value="ECO:0007669"/>
    <property type="project" value="UniProtKB-KW"/>
</dbReference>
<dbReference type="GO" id="GO:0004618">
    <property type="term" value="F:phosphoglycerate kinase activity"/>
    <property type="evidence" value="ECO:0007669"/>
    <property type="project" value="UniProtKB-UniRule"/>
</dbReference>
<dbReference type="GO" id="GO:0006094">
    <property type="term" value="P:gluconeogenesis"/>
    <property type="evidence" value="ECO:0007669"/>
    <property type="project" value="TreeGrafter"/>
</dbReference>
<dbReference type="GO" id="GO:0006096">
    <property type="term" value="P:glycolytic process"/>
    <property type="evidence" value="ECO:0007669"/>
    <property type="project" value="UniProtKB-UniRule"/>
</dbReference>
<dbReference type="FunFam" id="3.40.50.1260:FF:000001">
    <property type="entry name" value="Phosphoglycerate kinase"/>
    <property type="match status" value="1"/>
</dbReference>
<dbReference type="FunFam" id="3.40.50.1260:FF:000008">
    <property type="entry name" value="Phosphoglycerate kinase"/>
    <property type="match status" value="1"/>
</dbReference>
<dbReference type="Gene3D" id="3.40.50.1260">
    <property type="entry name" value="Phosphoglycerate kinase, N-terminal domain"/>
    <property type="match status" value="2"/>
</dbReference>
<dbReference type="HAMAP" id="MF_00145">
    <property type="entry name" value="Phosphoglyc_kinase"/>
    <property type="match status" value="1"/>
</dbReference>
<dbReference type="InterPro" id="IPR001576">
    <property type="entry name" value="Phosphoglycerate_kinase"/>
</dbReference>
<dbReference type="InterPro" id="IPR015911">
    <property type="entry name" value="Phosphoglycerate_kinase_CS"/>
</dbReference>
<dbReference type="InterPro" id="IPR015824">
    <property type="entry name" value="Phosphoglycerate_kinase_N"/>
</dbReference>
<dbReference type="InterPro" id="IPR036043">
    <property type="entry name" value="Phosphoglycerate_kinase_sf"/>
</dbReference>
<dbReference type="PANTHER" id="PTHR11406">
    <property type="entry name" value="PHOSPHOGLYCERATE KINASE"/>
    <property type="match status" value="1"/>
</dbReference>
<dbReference type="PANTHER" id="PTHR11406:SF23">
    <property type="entry name" value="PHOSPHOGLYCERATE KINASE 1, CHLOROPLASTIC-RELATED"/>
    <property type="match status" value="1"/>
</dbReference>
<dbReference type="Pfam" id="PF00162">
    <property type="entry name" value="PGK"/>
    <property type="match status" value="1"/>
</dbReference>
<dbReference type="PIRSF" id="PIRSF000724">
    <property type="entry name" value="Pgk"/>
    <property type="match status" value="1"/>
</dbReference>
<dbReference type="PRINTS" id="PR00477">
    <property type="entry name" value="PHGLYCKINASE"/>
</dbReference>
<dbReference type="SUPFAM" id="SSF53748">
    <property type="entry name" value="Phosphoglycerate kinase"/>
    <property type="match status" value="1"/>
</dbReference>
<dbReference type="PROSITE" id="PS00111">
    <property type="entry name" value="PGLYCERATE_KINASE"/>
    <property type="match status" value="1"/>
</dbReference>
<gene>
    <name evidence="1" type="primary">pgk</name>
    <name type="ordered locus">STER_1755</name>
</gene>
<accession>Q03IS8</accession>
<reference key="1">
    <citation type="journal article" date="2006" name="Proc. Natl. Acad. Sci. U.S.A.">
        <title>Comparative genomics of the lactic acid bacteria.</title>
        <authorList>
            <person name="Makarova K.S."/>
            <person name="Slesarev A."/>
            <person name="Wolf Y.I."/>
            <person name="Sorokin A."/>
            <person name="Mirkin B."/>
            <person name="Koonin E.V."/>
            <person name="Pavlov A."/>
            <person name="Pavlova N."/>
            <person name="Karamychev V."/>
            <person name="Polouchine N."/>
            <person name="Shakhova V."/>
            <person name="Grigoriev I."/>
            <person name="Lou Y."/>
            <person name="Rohksar D."/>
            <person name="Lucas S."/>
            <person name="Huang K."/>
            <person name="Goodstein D.M."/>
            <person name="Hawkins T."/>
            <person name="Plengvidhya V."/>
            <person name="Welker D."/>
            <person name="Hughes J."/>
            <person name="Goh Y."/>
            <person name="Benson A."/>
            <person name="Baldwin K."/>
            <person name="Lee J.-H."/>
            <person name="Diaz-Muniz I."/>
            <person name="Dosti B."/>
            <person name="Smeianov V."/>
            <person name="Wechter W."/>
            <person name="Barabote R."/>
            <person name="Lorca G."/>
            <person name="Altermann E."/>
            <person name="Barrangou R."/>
            <person name="Ganesan B."/>
            <person name="Xie Y."/>
            <person name="Rawsthorne H."/>
            <person name="Tamir D."/>
            <person name="Parker C."/>
            <person name="Breidt F."/>
            <person name="Broadbent J.R."/>
            <person name="Hutkins R."/>
            <person name="O'Sullivan D."/>
            <person name="Steele J."/>
            <person name="Unlu G."/>
            <person name="Saier M.H. Jr."/>
            <person name="Klaenhammer T."/>
            <person name="Richardson P."/>
            <person name="Kozyavkin S."/>
            <person name="Weimer B.C."/>
            <person name="Mills D.A."/>
        </authorList>
    </citation>
    <scope>NUCLEOTIDE SEQUENCE [LARGE SCALE GENOMIC DNA]</scope>
    <source>
        <strain>ATCC BAA-491 / LMD-9</strain>
    </source>
</reference>
<protein>
    <recommendedName>
        <fullName evidence="1">Phosphoglycerate kinase</fullName>
        <ecNumber evidence="1">2.7.2.3</ecNumber>
    </recommendedName>
</protein>
<sequence>MAKLTVKDVELKGKKVLVRVDFNVPVKDGVITNDNRITAALPTIKYILEQGGRAILFSHLGRVKEEADKEGKSLAPVAADLAAKLGQDVKFIPGVTRGAELEAAVNALEDGQVLLVENTRFEDVDGKKESKNDPELGKYWASLGDGIFVNDAFGTAHRAHASNVGISANVEKAVAGFLLENEIAYIQEAVENPERPFVAILGGSKVSDKIGVIENLLEKADKVLIGGGMTYTFFKAQGIEIGNSLVEEDKLDVAKALLEKSNGKLILPVDSKEANAFADYTEVKYTEGEAIDPGFLGLDIGPKSIAKFDEALTGAKTVVWNGPMGVFENPDFQAGTIGVMDAIVKQPGVKSIIGGGDSAAAAINLGYADKFSWISTGGGASMELLEGKELPGLAALTEK</sequence>
<feature type="chain" id="PRO_1000009664" description="Phosphoglycerate kinase">
    <location>
        <begin position="1"/>
        <end position="399"/>
    </location>
</feature>
<feature type="binding site" evidence="1">
    <location>
        <begin position="21"/>
        <end position="23"/>
    </location>
    <ligand>
        <name>substrate</name>
    </ligand>
</feature>
<feature type="binding site" evidence="1">
    <location>
        <position position="36"/>
    </location>
    <ligand>
        <name>substrate</name>
    </ligand>
</feature>
<feature type="binding site" evidence="1">
    <location>
        <begin position="59"/>
        <end position="62"/>
    </location>
    <ligand>
        <name>substrate</name>
    </ligand>
</feature>
<feature type="binding site" evidence="1">
    <location>
        <position position="120"/>
    </location>
    <ligand>
        <name>substrate</name>
    </ligand>
</feature>
<feature type="binding site" evidence="1">
    <location>
        <position position="158"/>
    </location>
    <ligand>
        <name>substrate</name>
    </ligand>
</feature>
<feature type="binding site" evidence="1">
    <location>
        <position position="209"/>
    </location>
    <ligand>
        <name>ATP</name>
        <dbReference type="ChEBI" id="CHEBI:30616"/>
    </ligand>
</feature>
<feature type="binding site" evidence="1">
    <location>
        <position position="297"/>
    </location>
    <ligand>
        <name>ATP</name>
        <dbReference type="ChEBI" id="CHEBI:30616"/>
    </ligand>
</feature>
<feature type="binding site" evidence="1">
    <location>
        <position position="328"/>
    </location>
    <ligand>
        <name>ATP</name>
        <dbReference type="ChEBI" id="CHEBI:30616"/>
    </ligand>
</feature>
<feature type="binding site" evidence="1">
    <location>
        <begin position="355"/>
        <end position="358"/>
    </location>
    <ligand>
        <name>ATP</name>
        <dbReference type="ChEBI" id="CHEBI:30616"/>
    </ligand>
</feature>